<name>LIPB_CERS1</name>
<accession>A3PH28</accession>
<reference key="1">
    <citation type="submission" date="2007-02" db="EMBL/GenBank/DDBJ databases">
        <title>Complete sequence of chromosome 1 of Rhodobacter sphaeroides ATCC 17029.</title>
        <authorList>
            <person name="Copeland A."/>
            <person name="Lucas S."/>
            <person name="Lapidus A."/>
            <person name="Barry K."/>
            <person name="Detter J.C."/>
            <person name="Glavina del Rio T."/>
            <person name="Hammon N."/>
            <person name="Israni S."/>
            <person name="Dalin E."/>
            <person name="Tice H."/>
            <person name="Pitluck S."/>
            <person name="Kiss H."/>
            <person name="Brettin T."/>
            <person name="Bruce D."/>
            <person name="Han C."/>
            <person name="Tapia R."/>
            <person name="Gilna P."/>
            <person name="Schmutz J."/>
            <person name="Larimer F."/>
            <person name="Land M."/>
            <person name="Hauser L."/>
            <person name="Kyrpides N."/>
            <person name="Mikhailova N."/>
            <person name="Richardson P."/>
            <person name="Mackenzie C."/>
            <person name="Choudhary M."/>
            <person name="Donohue T.J."/>
            <person name="Kaplan S."/>
        </authorList>
    </citation>
    <scope>NUCLEOTIDE SEQUENCE [LARGE SCALE GENOMIC DNA]</scope>
    <source>
        <strain>ATCC 17029 / ATH 2.4.9</strain>
    </source>
</reference>
<comment type="function">
    <text evidence="1">Catalyzes the transfer of endogenously produced octanoic acid from octanoyl-acyl-carrier-protein onto the lipoyl domains of lipoate-dependent enzymes. Lipoyl-ACP can also act as a substrate although octanoyl-ACP is likely to be the physiological substrate.</text>
</comment>
<comment type="catalytic activity">
    <reaction evidence="1">
        <text>octanoyl-[ACP] + L-lysyl-[protein] = N(6)-octanoyl-L-lysyl-[protein] + holo-[ACP] + H(+)</text>
        <dbReference type="Rhea" id="RHEA:17665"/>
        <dbReference type="Rhea" id="RHEA-COMP:9636"/>
        <dbReference type="Rhea" id="RHEA-COMP:9685"/>
        <dbReference type="Rhea" id="RHEA-COMP:9752"/>
        <dbReference type="Rhea" id="RHEA-COMP:9928"/>
        <dbReference type="ChEBI" id="CHEBI:15378"/>
        <dbReference type="ChEBI" id="CHEBI:29969"/>
        <dbReference type="ChEBI" id="CHEBI:64479"/>
        <dbReference type="ChEBI" id="CHEBI:78463"/>
        <dbReference type="ChEBI" id="CHEBI:78809"/>
        <dbReference type="EC" id="2.3.1.181"/>
    </reaction>
</comment>
<comment type="pathway">
    <text evidence="1">Protein modification; protein lipoylation via endogenous pathway; protein N(6)-(lipoyl)lysine from octanoyl-[acyl-carrier-protein]: step 1/2.</text>
</comment>
<comment type="subcellular location">
    <subcellularLocation>
        <location evidence="1">Cytoplasm</location>
    </subcellularLocation>
</comment>
<comment type="miscellaneous">
    <text evidence="1">In the reaction, the free carboxyl group of octanoic acid is attached via an amide linkage to the epsilon-amino group of a specific lysine residue of lipoyl domains of lipoate-dependent enzymes.</text>
</comment>
<comment type="similarity">
    <text evidence="1">Belongs to the LipB family.</text>
</comment>
<feature type="chain" id="PRO_1000001121" description="Octanoyltransferase">
    <location>
        <begin position="1"/>
        <end position="218"/>
    </location>
</feature>
<feature type="domain" description="BPL/LPL catalytic" evidence="2">
    <location>
        <begin position="32"/>
        <end position="218"/>
    </location>
</feature>
<feature type="active site" description="Acyl-thioester intermediate" evidence="1">
    <location>
        <position position="182"/>
    </location>
</feature>
<feature type="binding site" evidence="1">
    <location>
        <begin position="71"/>
        <end position="78"/>
    </location>
    <ligand>
        <name>substrate</name>
    </ligand>
</feature>
<feature type="binding site" evidence="1">
    <location>
        <begin position="151"/>
        <end position="153"/>
    </location>
    <ligand>
        <name>substrate</name>
    </ligand>
</feature>
<feature type="binding site" evidence="1">
    <location>
        <begin position="164"/>
        <end position="166"/>
    </location>
    <ligand>
        <name>substrate</name>
    </ligand>
</feature>
<feature type="site" description="Lowers pKa of active site Cys" evidence="1">
    <location>
        <position position="148"/>
    </location>
</feature>
<proteinExistence type="inferred from homology"/>
<organism>
    <name type="scientific">Cereibacter sphaeroides (strain ATCC 17029 / ATH 2.4.9)</name>
    <name type="common">Rhodobacter sphaeroides</name>
    <dbReference type="NCBI Taxonomy" id="349101"/>
    <lineage>
        <taxon>Bacteria</taxon>
        <taxon>Pseudomonadati</taxon>
        <taxon>Pseudomonadota</taxon>
        <taxon>Alphaproteobacteria</taxon>
        <taxon>Rhodobacterales</taxon>
        <taxon>Paracoccaceae</taxon>
        <taxon>Cereibacter</taxon>
    </lineage>
</organism>
<protein>
    <recommendedName>
        <fullName evidence="1">Octanoyltransferase</fullName>
        <ecNumber evidence="1">2.3.1.181</ecNumber>
    </recommendedName>
    <alternativeName>
        <fullName evidence="1">Lipoate-protein ligase B</fullName>
    </alternativeName>
    <alternativeName>
        <fullName evidence="1">Lipoyl/octanoyl transferase</fullName>
    </alternativeName>
    <alternativeName>
        <fullName evidence="1">Octanoyl-[acyl-carrier-protein]-protein N-octanoyltransferase</fullName>
    </alternativeName>
</protein>
<sequence>MSAVEWSILPGLSPYRETLEAMENRVAAIRAGEAAEAIWLLEHPPLYTAGTSARPEDLVEPERFPVHVAGRGGQYTYHGPGQRVAYVMLDLDRRGRDVRRFVTALEDWVIATLAEFNVRGERREGRVGVWVVRPDRPAGLDGSPREDKIAAIGVKLRRWVSFHGLSINLEPDLTHFEGIVPCGIREHGVTSLVDLGLPVTMQDLDAALLRTFPQHFPD</sequence>
<evidence type="ECO:0000255" key="1">
    <source>
        <dbReference type="HAMAP-Rule" id="MF_00013"/>
    </source>
</evidence>
<evidence type="ECO:0000255" key="2">
    <source>
        <dbReference type="PROSITE-ProRule" id="PRU01067"/>
    </source>
</evidence>
<dbReference type="EC" id="2.3.1.181" evidence="1"/>
<dbReference type="EMBL" id="CP000577">
    <property type="protein sequence ID" value="ABN75644.1"/>
    <property type="molecule type" value="Genomic_DNA"/>
</dbReference>
<dbReference type="RefSeq" id="WP_002722793.1">
    <property type="nucleotide sequence ID" value="NC_009049.1"/>
</dbReference>
<dbReference type="SMR" id="A3PH28"/>
<dbReference type="KEGG" id="rsh:Rsph17029_0528"/>
<dbReference type="HOGENOM" id="CLU_035168_3_0_5"/>
<dbReference type="UniPathway" id="UPA00538">
    <property type="reaction ID" value="UER00592"/>
</dbReference>
<dbReference type="GO" id="GO:0005737">
    <property type="term" value="C:cytoplasm"/>
    <property type="evidence" value="ECO:0007669"/>
    <property type="project" value="UniProtKB-SubCell"/>
</dbReference>
<dbReference type="GO" id="GO:0033819">
    <property type="term" value="F:lipoyl(octanoyl) transferase activity"/>
    <property type="evidence" value="ECO:0007669"/>
    <property type="project" value="UniProtKB-EC"/>
</dbReference>
<dbReference type="GO" id="GO:0036211">
    <property type="term" value="P:protein modification process"/>
    <property type="evidence" value="ECO:0007669"/>
    <property type="project" value="InterPro"/>
</dbReference>
<dbReference type="CDD" id="cd16444">
    <property type="entry name" value="LipB"/>
    <property type="match status" value="1"/>
</dbReference>
<dbReference type="Gene3D" id="3.30.930.10">
    <property type="entry name" value="Bira Bifunctional Protein, Domain 2"/>
    <property type="match status" value="1"/>
</dbReference>
<dbReference type="HAMAP" id="MF_00013">
    <property type="entry name" value="LipB"/>
    <property type="match status" value="1"/>
</dbReference>
<dbReference type="InterPro" id="IPR045864">
    <property type="entry name" value="aa-tRNA-synth_II/BPL/LPL"/>
</dbReference>
<dbReference type="InterPro" id="IPR004143">
    <property type="entry name" value="BPL_LPL_catalytic"/>
</dbReference>
<dbReference type="InterPro" id="IPR000544">
    <property type="entry name" value="Octanoyltransferase"/>
</dbReference>
<dbReference type="InterPro" id="IPR020605">
    <property type="entry name" value="Octanoyltransferase_CS"/>
</dbReference>
<dbReference type="NCBIfam" id="TIGR00214">
    <property type="entry name" value="lipB"/>
    <property type="match status" value="1"/>
</dbReference>
<dbReference type="NCBIfam" id="NF010921">
    <property type="entry name" value="PRK14341.1"/>
    <property type="match status" value="1"/>
</dbReference>
<dbReference type="NCBIfam" id="NF010925">
    <property type="entry name" value="PRK14345.1"/>
    <property type="match status" value="1"/>
</dbReference>
<dbReference type="PANTHER" id="PTHR10993:SF7">
    <property type="entry name" value="LIPOYLTRANSFERASE 2, MITOCHONDRIAL-RELATED"/>
    <property type="match status" value="1"/>
</dbReference>
<dbReference type="PANTHER" id="PTHR10993">
    <property type="entry name" value="OCTANOYLTRANSFERASE"/>
    <property type="match status" value="1"/>
</dbReference>
<dbReference type="Pfam" id="PF21948">
    <property type="entry name" value="LplA-B_cat"/>
    <property type="match status" value="1"/>
</dbReference>
<dbReference type="PIRSF" id="PIRSF016262">
    <property type="entry name" value="LPLase"/>
    <property type="match status" value="1"/>
</dbReference>
<dbReference type="SUPFAM" id="SSF55681">
    <property type="entry name" value="Class II aaRS and biotin synthetases"/>
    <property type="match status" value="1"/>
</dbReference>
<dbReference type="PROSITE" id="PS51733">
    <property type="entry name" value="BPL_LPL_CATALYTIC"/>
    <property type="match status" value="1"/>
</dbReference>
<dbReference type="PROSITE" id="PS01313">
    <property type="entry name" value="LIPB"/>
    <property type="match status" value="1"/>
</dbReference>
<gene>
    <name evidence="1" type="primary">lipB</name>
    <name type="ordered locus">Rsph17029_0528</name>
</gene>
<keyword id="KW-0012">Acyltransferase</keyword>
<keyword id="KW-0963">Cytoplasm</keyword>
<keyword id="KW-0808">Transferase</keyword>